<sequence>MYIEVTGYGPALVLIHGWAMHSGVFAPLVEQLRPHHTLYLVDLPGHGYNHTTPTPLALPQVVHAIAAATPPAVWLGWSLGGLFALHAAATLPQVRGLIMLAATPCFVRREDWPHAVEVSIFTQFAQDLKQNYTETINRFLALDTLGSTHAQSELRQLRKILNARHTPNTATLQAGLELLAHTDLRRAVIDLTPPSLWIAGQRDRLVPAASIQAATALAPSGQTELLTITGGGHAPFLSHANQMTAALQHFIATLP</sequence>
<feature type="chain" id="PRO_1000140011" description="Pimeloyl-[acyl-carrier protein] methyl ester esterase">
    <location>
        <begin position="1"/>
        <end position="255"/>
    </location>
</feature>
<feature type="active site" description="Nucleophile" evidence="1">
    <location>
        <position position="78"/>
    </location>
</feature>
<feature type="active site" evidence="1">
    <location>
        <position position="203"/>
    </location>
</feature>
<feature type="active site" evidence="1">
    <location>
        <position position="233"/>
    </location>
</feature>
<feature type="binding site" evidence="1">
    <location>
        <position position="18"/>
    </location>
    <ligand>
        <name>substrate</name>
    </ligand>
</feature>
<feature type="binding site" evidence="1">
    <location>
        <begin position="78"/>
        <end position="79"/>
    </location>
    <ligand>
        <name>substrate</name>
    </ligand>
</feature>
<feature type="binding site" evidence="1">
    <location>
        <begin position="139"/>
        <end position="143"/>
    </location>
    <ligand>
        <name>substrate</name>
    </ligand>
</feature>
<feature type="binding site" evidence="1">
    <location>
        <position position="233"/>
    </location>
    <ligand>
        <name>substrate</name>
    </ligand>
</feature>
<gene>
    <name evidence="1" type="primary">bioH</name>
    <name type="ordered locus">Xfasm12_0709</name>
</gene>
<comment type="function">
    <text evidence="1">The physiological role of BioH is to remove the methyl group introduced by BioC when the pimeloyl moiety is complete. It allows to synthesize pimeloyl-ACP via the fatty acid synthetic pathway through the hydrolysis of the ester bonds of pimeloyl-ACP esters.</text>
</comment>
<comment type="catalytic activity">
    <reaction evidence="1">
        <text>6-carboxyhexanoyl-[ACP] methyl ester + H2O = 6-carboxyhexanoyl-[ACP] + methanol + H(+)</text>
        <dbReference type="Rhea" id="RHEA:42700"/>
        <dbReference type="Rhea" id="RHEA-COMP:9955"/>
        <dbReference type="Rhea" id="RHEA-COMP:10186"/>
        <dbReference type="ChEBI" id="CHEBI:15377"/>
        <dbReference type="ChEBI" id="CHEBI:15378"/>
        <dbReference type="ChEBI" id="CHEBI:17790"/>
        <dbReference type="ChEBI" id="CHEBI:78846"/>
        <dbReference type="ChEBI" id="CHEBI:82735"/>
        <dbReference type="EC" id="3.1.1.85"/>
    </reaction>
</comment>
<comment type="pathway">
    <text evidence="1">Cofactor biosynthesis; biotin biosynthesis.</text>
</comment>
<comment type="subunit">
    <text evidence="1">Monomer.</text>
</comment>
<comment type="subcellular location">
    <subcellularLocation>
        <location evidence="1">Cytoplasm</location>
    </subcellularLocation>
</comment>
<comment type="similarity">
    <text evidence="1">Belongs to the AB hydrolase superfamily. Carboxylesterase BioH family.</text>
</comment>
<proteinExistence type="inferred from homology"/>
<name>BIOH_XYLFM</name>
<accession>B0U6I9</accession>
<evidence type="ECO:0000255" key="1">
    <source>
        <dbReference type="HAMAP-Rule" id="MF_01260"/>
    </source>
</evidence>
<keyword id="KW-0093">Biotin biosynthesis</keyword>
<keyword id="KW-0963">Cytoplasm</keyword>
<keyword id="KW-0378">Hydrolase</keyword>
<keyword id="KW-0719">Serine esterase</keyword>
<dbReference type="EC" id="3.1.1.85" evidence="1"/>
<dbReference type="EMBL" id="CP000941">
    <property type="protein sequence ID" value="ACA11705.1"/>
    <property type="molecule type" value="Genomic_DNA"/>
</dbReference>
<dbReference type="RefSeq" id="WP_004083854.1">
    <property type="nucleotide sequence ID" value="NC_010513.1"/>
</dbReference>
<dbReference type="SMR" id="B0U6I9"/>
<dbReference type="ESTHER" id="xylfa-XF1356">
    <property type="family name" value="BioH"/>
</dbReference>
<dbReference type="KEGG" id="xfm:Xfasm12_0709"/>
<dbReference type="HOGENOM" id="CLU_020336_12_2_6"/>
<dbReference type="UniPathway" id="UPA00078"/>
<dbReference type="GO" id="GO:0005737">
    <property type="term" value="C:cytoplasm"/>
    <property type="evidence" value="ECO:0007669"/>
    <property type="project" value="UniProtKB-SubCell"/>
</dbReference>
<dbReference type="GO" id="GO:0016020">
    <property type="term" value="C:membrane"/>
    <property type="evidence" value="ECO:0007669"/>
    <property type="project" value="TreeGrafter"/>
</dbReference>
<dbReference type="GO" id="GO:0090499">
    <property type="term" value="F:pimelyl-[acyl-carrier protein] methyl ester esterase activity"/>
    <property type="evidence" value="ECO:0007669"/>
    <property type="project" value="UniProtKB-EC"/>
</dbReference>
<dbReference type="GO" id="GO:0009102">
    <property type="term" value="P:biotin biosynthetic process"/>
    <property type="evidence" value="ECO:0007669"/>
    <property type="project" value="UniProtKB-UniRule"/>
</dbReference>
<dbReference type="Gene3D" id="3.40.50.1820">
    <property type="entry name" value="alpha/beta hydrolase"/>
    <property type="match status" value="1"/>
</dbReference>
<dbReference type="HAMAP" id="MF_01260">
    <property type="entry name" value="Carboxylester"/>
    <property type="match status" value="1"/>
</dbReference>
<dbReference type="InterPro" id="IPR000073">
    <property type="entry name" value="AB_hydrolase_1"/>
</dbReference>
<dbReference type="InterPro" id="IPR029058">
    <property type="entry name" value="AB_hydrolase_fold"/>
</dbReference>
<dbReference type="InterPro" id="IPR050266">
    <property type="entry name" value="AB_hydrolase_sf"/>
</dbReference>
<dbReference type="InterPro" id="IPR010076">
    <property type="entry name" value="BioH"/>
</dbReference>
<dbReference type="NCBIfam" id="TIGR01738">
    <property type="entry name" value="bioH"/>
    <property type="match status" value="1"/>
</dbReference>
<dbReference type="PANTHER" id="PTHR43798:SF31">
    <property type="entry name" value="AB HYDROLASE SUPERFAMILY PROTEIN YCLE"/>
    <property type="match status" value="1"/>
</dbReference>
<dbReference type="PANTHER" id="PTHR43798">
    <property type="entry name" value="MONOACYLGLYCEROL LIPASE"/>
    <property type="match status" value="1"/>
</dbReference>
<dbReference type="Pfam" id="PF00561">
    <property type="entry name" value="Abhydrolase_1"/>
    <property type="match status" value="1"/>
</dbReference>
<dbReference type="SUPFAM" id="SSF53474">
    <property type="entry name" value="alpha/beta-Hydrolases"/>
    <property type="match status" value="1"/>
</dbReference>
<reference key="1">
    <citation type="journal article" date="2010" name="J. Bacteriol.">
        <title>Whole genome sequences of two Xylella fastidiosa strains (M12 and M23) causing almond leaf scorch disease in California.</title>
        <authorList>
            <person name="Chen J."/>
            <person name="Xie G."/>
            <person name="Han S."/>
            <person name="Chertkov O."/>
            <person name="Sims D."/>
            <person name="Civerolo E.L."/>
        </authorList>
    </citation>
    <scope>NUCLEOTIDE SEQUENCE [LARGE SCALE GENOMIC DNA]</scope>
    <source>
        <strain>M12</strain>
    </source>
</reference>
<protein>
    <recommendedName>
        <fullName evidence="1">Pimeloyl-[acyl-carrier protein] methyl ester esterase</fullName>
        <ecNumber evidence="1">3.1.1.85</ecNumber>
    </recommendedName>
    <alternativeName>
        <fullName evidence="1">Biotin synthesis protein BioH</fullName>
    </alternativeName>
    <alternativeName>
        <fullName evidence="1">Carboxylesterase BioH</fullName>
    </alternativeName>
</protein>
<organism>
    <name type="scientific">Xylella fastidiosa (strain M12)</name>
    <dbReference type="NCBI Taxonomy" id="405440"/>
    <lineage>
        <taxon>Bacteria</taxon>
        <taxon>Pseudomonadati</taxon>
        <taxon>Pseudomonadota</taxon>
        <taxon>Gammaproteobacteria</taxon>
        <taxon>Lysobacterales</taxon>
        <taxon>Lysobacteraceae</taxon>
        <taxon>Xylella</taxon>
    </lineage>
</organism>